<evidence type="ECO:0000255" key="1">
    <source>
        <dbReference type="HAMAP-Rule" id="MF_01382"/>
    </source>
</evidence>
<evidence type="ECO:0000256" key="2">
    <source>
        <dbReference type="SAM" id="MobiDB-lite"/>
    </source>
</evidence>
<sequence>MLIKLLTKVFGSRNDRTLRRMRKVVNIINAMEPEMEKLSDEELKGKTAEFRARLEKGEVLENLIPEAFAVVREASKRVFGMRHFDVQLLGGMVLNERCIAEMRTGEGKTLTATLPAYLNALTGKGVHVVTVNDYLAQRDAENNRPLFEFLGLTVGINLPGMPAPAKREAYAADITYGTNNEYGFDYLRDNMAFSPEERVQRKLHYALVDEVDSILIDEARTPLIISGPAEDSSEMYKRVNKIIPHLIRQEKEDSETFQGEGHFSVDEKSRQVNLTERGLVLIEELLVKEGIMDEGESLYSPANIMLMHHVTAALRAHALFTRDVDYIVKDGEVIIVDEHTGRTMQGRRWSDGLHQAVEAKEGVQIQNENQTLASITFQNYFRLYEKLAGMTGTADTEAFEFSSIYKLDTVVVPTNRPMIRKDLPDLVYMTEAEKIQAIIEDIKERTAKGQPVLVGTISIEKSELVSNELTKAGIKHNVLNAKFHANEAAIVAQAGYPAAVTIATNMAGRGTDIVLGGSWQAEVAALENPTAEQIEKIKADWQVRHDAVLEAGGLHIIGTERHESRRIDNQLRGRSGRQGDAGSSRFYLSMEDALMRIFASDRVSGMMRKLGMKPGEAIEHPWVTKAIANAQRKVESRNFDIRKQLLEYDDVANDQRRAIYSQRNELLDVSDVSETINSIREDVFKATIDAYIPPQSLEEMWDIPGLQERLKNDFDLDLPIAEWLDKEPELHEETLRERILAQSIEVYQRKEEVVGAEMMRHFEKGVMLQTLDSLWKEHLAAMDYLRQGIHLRGYAQKDPKQEYKRESFSMFAAMLESLKYEVISTLSKVQVRMPEEVEELEQQRRMEAERLAQMQQLSHQDDDSAAAAALAAQTGERKVGRNDPCPCGSGKKYKQCHGRLQ</sequence>
<dbReference type="EC" id="7.4.2.8" evidence="1"/>
<dbReference type="EMBL" id="CP000948">
    <property type="protein sequence ID" value="ACB01279.1"/>
    <property type="molecule type" value="Genomic_DNA"/>
</dbReference>
<dbReference type="RefSeq" id="WP_000905789.1">
    <property type="nucleotide sequence ID" value="NC_010473.1"/>
</dbReference>
<dbReference type="SMR" id="B1XC75"/>
<dbReference type="GeneID" id="93777336"/>
<dbReference type="KEGG" id="ecd:ECDH10B_0080"/>
<dbReference type="HOGENOM" id="CLU_005314_3_0_6"/>
<dbReference type="GO" id="GO:0031522">
    <property type="term" value="C:cell envelope Sec protein transport complex"/>
    <property type="evidence" value="ECO:0007669"/>
    <property type="project" value="TreeGrafter"/>
</dbReference>
<dbReference type="GO" id="GO:0005829">
    <property type="term" value="C:cytosol"/>
    <property type="evidence" value="ECO:0007669"/>
    <property type="project" value="TreeGrafter"/>
</dbReference>
<dbReference type="GO" id="GO:0005886">
    <property type="term" value="C:plasma membrane"/>
    <property type="evidence" value="ECO:0007669"/>
    <property type="project" value="UniProtKB-SubCell"/>
</dbReference>
<dbReference type="GO" id="GO:0005524">
    <property type="term" value="F:ATP binding"/>
    <property type="evidence" value="ECO:0007669"/>
    <property type="project" value="UniProtKB-UniRule"/>
</dbReference>
<dbReference type="GO" id="GO:0046872">
    <property type="term" value="F:metal ion binding"/>
    <property type="evidence" value="ECO:0007669"/>
    <property type="project" value="UniProtKB-KW"/>
</dbReference>
<dbReference type="GO" id="GO:0008564">
    <property type="term" value="F:protein-exporting ATPase activity"/>
    <property type="evidence" value="ECO:0007669"/>
    <property type="project" value="UniProtKB-EC"/>
</dbReference>
<dbReference type="GO" id="GO:0065002">
    <property type="term" value="P:intracellular protein transmembrane transport"/>
    <property type="evidence" value="ECO:0007669"/>
    <property type="project" value="UniProtKB-UniRule"/>
</dbReference>
<dbReference type="GO" id="GO:0017038">
    <property type="term" value="P:protein import"/>
    <property type="evidence" value="ECO:0007669"/>
    <property type="project" value="InterPro"/>
</dbReference>
<dbReference type="GO" id="GO:0006605">
    <property type="term" value="P:protein targeting"/>
    <property type="evidence" value="ECO:0007669"/>
    <property type="project" value="UniProtKB-UniRule"/>
</dbReference>
<dbReference type="GO" id="GO:0043952">
    <property type="term" value="P:protein transport by the Sec complex"/>
    <property type="evidence" value="ECO:0007669"/>
    <property type="project" value="TreeGrafter"/>
</dbReference>
<dbReference type="CDD" id="cd17928">
    <property type="entry name" value="DEXDc_SecA"/>
    <property type="match status" value="1"/>
</dbReference>
<dbReference type="CDD" id="cd18803">
    <property type="entry name" value="SF2_C_secA"/>
    <property type="match status" value="1"/>
</dbReference>
<dbReference type="FunFam" id="1.10.3060.10:FF:000001">
    <property type="entry name" value="Preprotein translocase subunit SecA"/>
    <property type="match status" value="1"/>
</dbReference>
<dbReference type="FunFam" id="3.40.50.300:FF:000081">
    <property type="entry name" value="Preprotein translocase subunit SecA"/>
    <property type="match status" value="1"/>
</dbReference>
<dbReference type="FunFam" id="3.40.50.300:FF:000113">
    <property type="entry name" value="Preprotein translocase subunit SecA"/>
    <property type="match status" value="1"/>
</dbReference>
<dbReference type="FunFam" id="3.90.1440.10:FF:000001">
    <property type="entry name" value="Preprotein translocase subunit SecA"/>
    <property type="match status" value="1"/>
</dbReference>
<dbReference type="Gene3D" id="1.10.3060.10">
    <property type="entry name" value="Helical scaffold and wing domains of SecA"/>
    <property type="match status" value="1"/>
</dbReference>
<dbReference type="Gene3D" id="3.40.50.300">
    <property type="entry name" value="P-loop containing nucleotide triphosphate hydrolases"/>
    <property type="match status" value="2"/>
</dbReference>
<dbReference type="Gene3D" id="3.90.1440.10">
    <property type="entry name" value="SecA, preprotein cross-linking domain"/>
    <property type="match status" value="1"/>
</dbReference>
<dbReference type="HAMAP" id="MF_01382">
    <property type="entry name" value="SecA"/>
    <property type="match status" value="1"/>
</dbReference>
<dbReference type="InterPro" id="IPR014001">
    <property type="entry name" value="Helicase_ATP-bd"/>
</dbReference>
<dbReference type="InterPro" id="IPR001650">
    <property type="entry name" value="Helicase_C-like"/>
</dbReference>
<dbReference type="InterPro" id="IPR027417">
    <property type="entry name" value="P-loop_NTPase"/>
</dbReference>
<dbReference type="InterPro" id="IPR004027">
    <property type="entry name" value="SEC_C_motif"/>
</dbReference>
<dbReference type="InterPro" id="IPR000185">
    <property type="entry name" value="SecA"/>
</dbReference>
<dbReference type="InterPro" id="IPR020937">
    <property type="entry name" value="SecA_CS"/>
</dbReference>
<dbReference type="InterPro" id="IPR011115">
    <property type="entry name" value="SecA_DEAD"/>
</dbReference>
<dbReference type="InterPro" id="IPR014018">
    <property type="entry name" value="SecA_motor_DEAD"/>
</dbReference>
<dbReference type="InterPro" id="IPR011130">
    <property type="entry name" value="SecA_preprotein_X-link_dom"/>
</dbReference>
<dbReference type="InterPro" id="IPR044722">
    <property type="entry name" value="SecA_SF2_C"/>
</dbReference>
<dbReference type="InterPro" id="IPR011116">
    <property type="entry name" value="SecA_Wing/Scaffold"/>
</dbReference>
<dbReference type="InterPro" id="IPR036266">
    <property type="entry name" value="SecA_Wing/Scaffold_sf"/>
</dbReference>
<dbReference type="InterPro" id="IPR036670">
    <property type="entry name" value="SecA_X-link_sf"/>
</dbReference>
<dbReference type="NCBIfam" id="NF009538">
    <property type="entry name" value="PRK12904.1"/>
    <property type="match status" value="1"/>
</dbReference>
<dbReference type="NCBIfam" id="TIGR00963">
    <property type="entry name" value="secA"/>
    <property type="match status" value="1"/>
</dbReference>
<dbReference type="PANTHER" id="PTHR30612:SF0">
    <property type="entry name" value="CHLOROPLAST PROTEIN-TRANSPORTING ATPASE"/>
    <property type="match status" value="1"/>
</dbReference>
<dbReference type="PANTHER" id="PTHR30612">
    <property type="entry name" value="SECA INNER MEMBRANE COMPONENT OF SEC PROTEIN SECRETION SYSTEM"/>
    <property type="match status" value="1"/>
</dbReference>
<dbReference type="Pfam" id="PF21090">
    <property type="entry name" value="P-loop_SecA"/>
    <property type="match status" value="1"/>
</dbReference>
<dbReference type="Pfam" id="PF02810">
    <property type="entry name" value="SEC-C"/>
    <property type="match status" value="1"/>
</dbReference>
<dbReference type="Pfam" id="PF07517">
    <property type="entry name" value="SecA_DEAD"/>
    <property type="match status" value="1"/>
</dbReference>
<dbReference type="Pfam" id="PF01043">
    <property type="entry name" value="SecA_PP_bind"/>
    <property type="match status" value="1"/>
</dbReference>
<dbReference type="Pfam" id="PF07516">
    <property type="entry name" value="SecA_SW"/>
    <property type="match status" value="1"/>
</dbReference>
<dbReference type="PRINTS" id="PR00906">
    <property type="entry name" value="SECA"/>
</dbReference>
<dbReference type="SMART" id="SM00957">
    <property type="entry name" value="SecA_DEAD"/>
    <property type="match status" value="1"/>
</dbReference>
<dbReference type="SMART" id="SM00958">
    <property type="entry name" value="SecA_PP_bind"/>
    <property type="match status" value="1"/>
</dbReference>
<dbReference type="SUPFAM" id="SSF81886">
    <property type="entry name" value="Helical scaffold and wing domains of SecA"/>
    <property type="match status" value="1"/>
</dbReference>
<dbReference type="SUPFAM" id="SSF52540">
    <property type="entry name" value="P-loop containing nucleoside triphosphate hydrolases"/>
    <property type="match status" value="2"/>
</dbReference>
<dbReference type="SUPFAM" id="SSF81767">
    <property type="entry name" value="Pre-protein crosslinking domain of SecA"/>
    <property type="match status" value="1"/>
</dbReference>
<dbReference type="PROSITE" id="PS01312">
    <property type="entry name" value="SECA"/>
    <property type="match status" value="1"/>
</dbReference>
<dbReference type="PROSITE" id="PS51196">
    <property type="entry name" value="SECA_MOTOR_DEAD"/>
    <property type="match status" value="1"/>
</dbReference>
<gene>
    <name evidence="1" type="primary">secA</name>
    <name type="ordered locus">ECDH10B_0080</name>
</gene>
<keyword id="KW-0067">ATP-binding</keyword>
<keyword id="KW-0997">Cell inner membrane</keyword>
<keyword id="KW-1003">Cell membrane</keyword>
<keyword id="KW-0963">Cytoplasm</keyword>
<keyword id="KW-0472">Membrane</keyword>
<keyword id="KW-0479">Metal-binding</keyword>
<keyword id="KW-0547">Nucleotide-binding</keyword>
<keyword id="KW-0653">Protein transport</keyword>
<keyword id="KW-1278">Translocase</keyword>
<keyword id="KW-0811">Translocation</keyword>
<keyword id="KW-0813">Transport</keyword>
<keyword id="KW-0862">Zinc</keyword>
<comment type="function">
    <text evidence="1">Part of the Sec protein translocase complex. Interacts with the SecYEG preprotein conducting channel. Has a central role in coupling the hydrolysis of ATP to the transfer of proteins into and across the cell membrane, serving both as a receptor for the preprotein-SecB complex and as an ATP-driven molecular motor driving the stepwise translocation of polypeptide chains across the membrane.</text>
</comment>
<comment type="catalytic activity">
    <reaction evidence="1">
        <text>ATP + H2O + cellular proteinSide 1 = ADP + phosphate + cellular proteinSide 2.</text>
        <dbReference type="EC" id="7.4.2.8"/>
    </reaction>
</comment>
<comment type="cofactor">
    <cofactor evidence="1">
        <name>Zn(2+)</name>
        <dbReference type="ChEBI" id="CHEBI:29105"/>
    </cofactor>
    <text evidence="1">May bind 1 zinc ion per subunit.</text>
</comment>
<comment type="subunit">
    <text evidence="1">Monomer and homodimer. Part of the essential Sec protein translocation apparatus which comprises SecA, SecYEG and auxiliary proteins SecDF-YajC and YidC.</text>
</comment>
<comment type="subcellular location">
    <subcellularLocation>
        <location evidence="1">Cell inner membrane</location>
        <topology evidence="1">Peripheral membrane protein</topology>
        <orientation evidence="1">Cytoplasmic side</orientation>
    </subcellularLocation>
    <subcellularLocation>
        <location evidence="1">Cytoplasm</location>
    </subcellularLocation>
    <text evidence="1">Distribution is 50-50.</text>
</comment>
<comment type="induction">
    <text evidence="1">Repressed under conditions of excess protein secretion capacity and derepressed when protein secretion becomes limiting. This is regulated by SecM.</text>
</comment>
<comment type="similarity">
    <text evidence="1">Belongs to the SecA family.</text>
</comment>
<organism>
    <name type="scientific">Escherichia coli (strain K12 / DH10B)</name>
    <dbReference type="NCBI Taxonomy" id="316385"/>
    <lineage>
        <taxon>Bacteria</taxon>
        <taxon>Pseudomonadati</taxon>
        <taxon>Pseudomonadota</taxon>
        <taxon>Gammaproteobacteria</taxon>
        <taxon>Enterobacterales</taxon>
        <taxon>Enterobacteriaceae</taxon>
        <taxon>Escherichia</taxon>
    </lineage>
</organism>
<proteinExistence type="inferred from homology"/>
<feature type="chain" id="PRO_1000145009" description="Protein translocase subunit SecA">
    <location>
        <begin position="1"/>
        <end position="901"/>
    </location>
</feature>
<feature type="region of interest" description="Disordered" evidence="2">
    <location>
        <begin position="859"/>
        <end position="901"/>
    </location>
</feature>
<feature type="compositionally biased region" description="Basic residues" evidence="2">
    <location>
        <begin position="891"/>
        <end position="901"/>
    </location>
</feature>
<feature type="binding site" evidence="1">
    <location>
        <position position="87"/>
    </location>
    <ligand>
        <name>ATP</name>
        <dbReference type="ChEBI" id="CHEBI:30616"/>
    </ligand>
</feature>
<feature type="binding site" evidence="1">
    <location>
        <begin position="105"/>
        <end position="109"/>
    </location>
    <ligand>
        <name>ATP</name>
        <dbReference type="ChEBI" id="CHEBI:30616"/>
    </ligand>
</feature>
<feature type="binding site" evidence="1">
    <location>
        <position position="512"/>
    </location>
    <ligand>
        <name>ATP</name>
        <dbReference type="ChEBI" id="CHEBI:30616"/>
    </ligand>
</feature>
<feature type="binding site" evidence="1">
    <location>
        <position position="885"/>
    </location>
    <ligand>
        <name>Zn(2+)</name>
        <dbReference type="ChEBI" id="CHEBI:29105"/>
    </ligand>
</feature>
<feature type="binding site" evidence="1">
    <location>
        <position position="887"/>
    </location>
    <ligand>
        <name>Zn(2+)</name>
        <dbReference type="ChEBI" id="CHEBI:29105"/>
    </ligand>
</feature>
<feature type="binding site" evidence="1">
    <location>
        <position position="896"/>
    </location>
    <ligand>
        <name>Zn(2+)</name>
        <dbReference type="ChEBI" id="CHEBI:29105"/>
    </ligand>
</feature>
<feature type="binding site" evidence="1">
    <location>
        <position position="897"/>
    </location>
    <ligand>
        <name>Zn(2+)</name>
        <dbReference type="ChEBI" id="CHEBI:29105"/>
    </ligand>
</feature>
<accession>B1XC75</accession>
<reference key="1">
    <citation type="journal article" date="2008" name="J. Bacteriol.">
        <title>The complete genome sequence of Escherichia coli DH10B: insights into the biology of a laboratory workhorse.</title>
        <authorList>
            <person name="Durfee T."/>
            <person name="Nelson R."/>
            <person name="Baldwin S."/>
            <person name="Plunkett G. III"/>
            <person name="Burland V."/>
            <person name="Mau B."/>
            <person name="Petrosino J.F."/>
            <person name="Qin X."/>
            <person name="Muzny D.M."/>
            <person name="Ayele M."/>
            <person name="Gibbs R.A."/>
            <person name="Csorgo B."/>
            <person name="Posfai G."/>
            <person name="Weinstock G.M."/>
            <person name="Blattner F.R."/>
        </authorList>
    </citation>
    <scope>NUCLEOTIDE SEQUENCE [LARGE SCALE GENOMIC DNA]</scope>
    <source>
        <strain>K12 / DH10B</strain>
    </source>
</reference>
<name>SECA_ECODH</name>
<protein>
    <recommendedName>
        <fullName evidence="1">Protein translocase subunit SecA</fullName>
        <ecNumber evidence="1">7.4.2.8</ecNumber>
    </recommendedName>
</protein>